<organism>
    <name type="scientific">Bos taurus</name>
    <name type="common">Bovine</name>
    <dbReference type="NCBI Taxonomy" id="9913"/>
    <lineage>
        <taxon>Eukaryota</taxon>
        <taxon>Metazoa</taxon>
        <taxon>Chordata</taxon>
        <taxon>Craniata</taxon>
        <taxon>Vertebrata</taxon>
        <taxon>Euteleostomi</taxon>
        <taxon>Mammalia</taxon>
        <taxon>Eutheria</taxon>
        <taxon>Laurasiatheria</taxon>
        <taxon>Artiodactyla</taxon>
        <taxon>Ruminantia</taxon>
        <taxon>Pecora</taxon>
        <taxon>Bovidae</taxon>
        <taxon>Bovinae</taxon>
        <taxon>Bos</taxon>
    </lineage>
</organism>
<evidence type="ECO:0000250" key="1"/>
<evidence type="ECO:0000255" key="2"/>
<evidence type="ECO:0000255" key="3">
    <source>
        <dbReference type="PROSITE-ProRule" id="PRU00114"/>
    </source>
</evidence>
<evidence type="ECO:0000305" key="4"/>
<name>MPZL2_BOVIN</name>
<accession>Q5EAB0</accession>
<protein>
    <recommendedName>
        <fullName>Myelin protein zero-like protein 2</fullName>
    </recommendedName>
    <alternativeName>
        <fullName>Epithelial V-like antigen 1</fullName>
    </alternativeName>
</protein>
<comment type="function">
    <text evidence="1">Mediates homophilic cell-cell adhesion.</text>
</comment>
<comment type="subcellular location">
    <subcellularLocation>
        <location evidence="4">Membrane</location>
        <topology evidence="4">Single-pass type I membrane protein</topology>
    </subcellularLocation>
</comment>
<comment type="similarity">
    <text evidence="4">Belongs to the myelin P0 protein family.</text>
</comment>
<proteinExistence type="evidence at transcript level"/>
<keyword id="KW-0130">Cell adhesion</keyword>
<keyword id="KW-1015">Disulfide bond</keyword>
<keyword id="KW-0325">Glycoprotein</keyword>
<keyword id="KW-0393">Immunoglobulin domain</keyword>
<keyword id="KW-0472">Membrane</keyword>
<keyword id="KW-1185">Reference proteome</keyword>
<keyword id="KW-0732">Signal</keyword>
<keyword id="KW-0812">Transmembrane</keyword>
<keyword id="KW-1133">Transmembrane helix</keyword>
<feature type="signal peptide" evidence="2">
    <location>
        <begin position="1"/>
        <end position="26"/>
    </location>
</feature>
<feature type="chain" id="PRO_0000283718" description="Myelin protein zero-like protein 2">
    <location>
        <begin position="27"/>
        <end position="215"/>
    </location>
</feature>
<feature type="topological domain" description="Extracellular" evidence="2">
    <location>
        <begin position="27"/>
        <end position="154"/>
    </location>
</feature>
<feature type="transmembrane region" description="Helical" evidence="2">
    <location>
        <begin position="155"/>
        <end position="175"/>
    </location>
</feature>
<feature type="topological domain" description="Cytoplasmic" evidence="2">
    <location>
        <begin position="176"/>
        <end position="215"/>
    </location>
</feature>
<feature type="domain" description="Ig-like V-type">
    <location>
        <begin position="27"/>
        <end position="141"/>
    </location>
</feature>
<feature type="glycosylation site" description="N-linked (GlcNAc...) asparagine" evidence="2">
    <location>
        <position position="39"/>
    </location>
</feature>
<feature type="glycosylation site" description="N-linked (GlcNAc...) asparagine" evidence="2">
    <location>
        <position position="118"/>
    </location>
</feature>
<feature type="disulfide bond" evidence="3">
    <location>
        <begin position="47"/>
        <end position="123"/>
    </location>
</feature>
<gene>
    <name type="primary">MPZL2</name>
    <name type="synonym">EVA1</name>
</gene>
<reference key="1">
    <citation type="journal article" date="2005" name="BMC Genomics">
        <title>Characterization of 954 bovine full-CDS cDNA sequences.</title>
        <authorList>
            <person name="Harhay G.P."/>
            <person name="Sonstegard T.S."/>
            <person name="Keele J.W."/>
            <person name="Heaton M.P."/>
            <person name="Clawson M.L."/>
            <person name="Snelling W.M."/>
            <person name="Wiedmann R.T."/>
            <person name="Van Tassell C.P."/>
            <person name="Smith T.P.L."/>
        </authorList>
    </citation>
    <scope>NUCLEOTIDE SEQUENCE [LARGE SCALE MRNA]</scope>
</reference>
<reference key="2">
    <citation type="submission" date="2005-08" db="EMBL/GenBank/DDBJ databases">
        <authorList>
            <consortium name="NIH - Mammalian Gene Collection (MGC) project"/>
        </authorList>
    </citation>
    <scope>NUCLEOTIDE SEQUENCE [LARGE SCALE MRNA]</scope>
    <source>
        <strain>Crossbred X Angus</strain>
        <tissue>Ileum</tissue>
    </source>
</reference>
<sequence>MYGKSPTRAVLFLLGLQLTALWPTAAVEIYTPRVLEAVNGTDVRLKCTFSSFAPVGDALTVTWNFRPRDGGPEQFVFYYHVDPFKPMSGRFKDRVAWDGNPERYDVSILLWKLQFDDNGTYTCQVKNPPDVDGLIGEIQLSVVQTVRFSEIHFLALAIGSACALMVIIVIVVVLFQHFRKKRRAERAHRVVEIKSKEEEKLNQEKKASVSLEYTD</sequence>
<dbReference type="EMBL" id="BT020659">
    <property type="protein sequence ID" value="AAX08676.1"/>
    <property type="molecule type" value="mRNA"/>
</dbReference>
<dbReference type="EMBL" id="BC102486">
    <property type="protein sequence ID" value="AAI02487.1"/>
    <property type="molecule type" value="mRNA"/>
</dbReference>
<dbReference type="RefSeq" id="NP_001015673.1">
    <property type="nucleotide sequence ID" value="NM_001015673.2"/>
</dbReference>
<dbReference type="SMR" id="Q5EAB0"/>
<dbReference type="FunCoup" id="Q5EAB0">
    <property type="interactions" value="213"/>
</dbReference>
<dbReference type="STRING" id="9913.ENSBTAP00000067214"/>
<dbReference type="GlyCosmos" id="Q5EAB0">
    <property type="glycosylation" value="2 sites, No reported glycans"/>
</dbReference>
<dbReference type="GlyGen" id="Q5EAB0">
    <property type="glycosylation" value="2 sites"/>
</dbReference>
<dbReference type="PaxDb" id="9913-ENSBTAP00000001633"/>
<dbReference type="Ensembl" id="ENSBTAT00000001633.3">
    <property type="protein sequence ID" value="ENSBTAP00000001633.1"/>
    <property type="gene ID" value="ENSBTAG00000033510.3"/>
</dbReference>
<dbReference type="GeneID" id="540423"/>
<dbReference type="KEGG" id="bta:540423"/>
<dbReference type="CTD" id="10205"/>
<dbReference type="VEuPathDB" id="HostDB:ENSBTAG00000033510"/>
<dbReference type="VGNC" id="VGNC:31593">
    <property type="gene designation" value="MPZL2"/>
</dbReference>
<dbReference type="eggNOG" id="ENOG502RYWU">
    <property type="taxonomic scope" value="Eukaryota"/>
</dbReference>
<dbReference type="GeneTree" id="ENSGT01030000234556"/>
<dbReference type="HOGENOM" id="CLU_090350_0_0_1"/>
<dbReference type="InParanoid" id="Q5EAB0"/>
<dbReference type="OMA" id="FHEQPYP"/>
<dbReference type="OrthoDB" id="9419796at2759"/>
<dbReference type="TreeFam" id="TF331728"/>
<dbReference type="Proteomes" id="UP000009136">
    <property type="component" value="Chromosome 15"/>
</dbReference>
<dbReference type="Bgee" id="ENSBTAG00000033510">
    <property type="expression patterns" value="Expressed in rumen papilla and 98 other cell types or tissues"/>
</dbReference>
<dbReference type="GO" id="GO:0005886">
    <property type="term" value="C:plasma membrane"/>
    <property type="evidence" value="ECO:0000318"/>
    <property type="project" value="GO_Central"/>
</dbReference>
<dbReference type="GO" id="GO:0098609">
    <property type="term" value="P:cell-cell adhesion"/>
    <property type="evidence" value="ECO:0000318"/>
    <property type="project" value="GO_Central"/>
</dbReference>
<dbReference type="CDD" id="cd05880">
    <property type="entry name" value="IgV_EVA1"/>
    <property type="match status" value="1"/>
</dbReference>
<dbReference type="FunFam" id="2.60.40.10:FF:000193">
    <property type="entry name" value="Myelin protein zero-like 1 like"/>
    <property type="match status" value="1"/>
</dbReference>
<dbReference type="Gene3D" id="2.60.40.10">
    <property type="entry name" value="Immunoglobulins"/>
    <property type="match status" value="1"/>
</dbReference>
<dbReference type="InterPro" id="IPR007110">
    <property type="entry name" value="Ig-like_dom"/>
</dbReference>
<dbReference type="InterPro" id="IPR036179">
    <property type="entry name" value="Ig-like_dom_sf"/>
</dbReference>
<dbReference type="InterPro" id="IPR013783">
    <property type="entry name" value="Ig-like_fold"/>
</dbReference>
<dbReference type="InterPro" id="IPR003599">
    <property type="entry name" value="Ig_sub"/>
</dbReference>
<dbReference type="InterPro" id="IPR013106">
    <property type="entry name" value="Ig_V-set"/>
</dbReference>
<dbReference type="InterPro" id="IPR029863">
    <property type="entry name" value="MPZL2_Ig-like_dom"/>
</dbReference>
<dbReference type="InterPro" id="IPR000920">
    <property type="entry name" value="Myelin_P0-rel"/>
</dbReference>
<dbReference type="PANTHER" id="PTHR13869">
    <property type="entry name" value="MYELIN P0 RELATED"/>
    <property type="match status" value="1"/>
</dbReference>
<dbReference type="PANTHER" id="PTHR13869:SF21">
    <property type="entry name" value="MYELIN PROTEIN ZERO-LIKE PROTEIN 2"/>
    <property type="match status" value="1"/>
</dbReference>
<dbReference type="Pfam" id="PF07686">
    <property type="entry name" value="V-set"/>
    <property type="match status" value="1"/>
</dbReference>
<dbReference type="PRINTS" id="PR00213">
    <property type="entry name" value="MYELINP0"/>
</dbReference>
<dbReference type="SMART" id="SM00409">
    <property type="entry name" value="IG"/>
    <property type="match status" value="1"/>
</dbReference>
<dbReference type="SMART" id="SM00406">
    <property type="entry name" value="IGv"/>
    <property type="match status" value="1"/>
</dbReference>
<dbReference type="SUPFAM" id="SSF48726">
    <property type="entry name" value="Immunoglobulin"/>
    <property type="match status" value="1"/>
</dbReference>
<dbReference type="PROSITE" id="PS50835">
    <property type="entry name" value="IG_LIKE"/>
    <property type="match status" value="1"/>
</dbReference>